<organism>
    <name type="scientific">Pseudomonas putida</name>
    <name type="common">Arthrobacter siderocapsulatus</name>
    <dbReference type="NCBI Taxonomy" id="303"/>
    <lineage>
        <taxon>Bacteria</taxon>
        <taxon>Pseudomonadati</taxon>
        <taxon>Pseudomonadota</taxon>
        <taxon>Gammaproteobacteria</taxon>
        <taxon>Pseudomonadales</taxon>
        <taxon>Pseudomonadaceae</taxon>
        <taxon>Pseudomonas</taxon>
    </lineage>
</organism>
<reference key="1">
    <citation type="journal article" date="2001" name="J. Bacteriol.">
        <title>Cloning and characterisation of the pnb genes, encoding enzymes for 4-nitrobenzoate catabolism in Pseudomonas putida TW3.</title>
        <authorList>
            <person name="Hughes M.A."/>
            <person name="Williams P.A."/>
        </authorList>
    </citation>
    <scope>NUCLEOTIDE SEQUENCE [GENOMIC DNA]</scope>
    <source>
        <strain>TW3</strain>
    </source>
</reference>
<sequence length="182" mass="20634">MQVVYNFSQPGLQWKQSDHLRSLMTVTSRDWLLDRGSLTRRLRVLSDDDLEVVPLREEVGVILPHEADVLGLQLGAIGGVREVYLVGFGRPWVFARSIIVNSGSIEEGSALLQLGNMPLGDLLFGDGSFQRSEIEVCRYHDACNASARSTYPLWARRSVFKREKMHVLVQEMFLPALWEEMS</sequence>
<feature type="chain" id="PRO_0000240559" description="Probable chorismate pyruvate-lyase">
    <location>
        <begin position="1"/>
        <end position="182"/>
    </location>
</feature>
<feature type="binding site" evidence="1">
    <location>
        <position position="81"/>
    </location>
    <ligand>
        <name>substrate</name>
    </ligand>
</feature>
<feature type="binding site" evidence="1">
    <location>
        <position position="119"/>
    </location>
    <ligand>
        <name>substrate</name>
    </ligand>
</feature>
<feature type="binding site" evidence="1">
    <location>
        <position position="171"/>
    </location>
    <ligand>
        <name>substrate</name>
    </ligand>
</feature>
<name>UBIC_PSEPU</name>
<protein>
    <recommendedName>
        <fullName evidence="1">Probable chorismate pyruvate-lyase</fullName>
        <shortName evidence="1">CL</shortName>
        <shortName evidence="1">CPL</shortName>
        <ecNumber evidence="1">4.1.3.40</ecNumber>
    </recommendedName>
</protein>
<proteinExistence type="inferred from homology"/>
<keyword id="KW-0963">Cytoplasm</keyword>
<keyword id="KW-0456">Lyase</keyword>
<keyword id="KW-0670">Pyruvate</keyword>
<keyword id="KW-0831">Ubiquinone biosynthesis</keyword>
<evidence type="ECO:0000255" key="1">
    <source>
        <dbReference type="HAMAP-Rule" id="MF_01632"/>
    </source>
</evidence>
<comment type="function">
    <text evidence="1">Removes the pyruvyl group from chorismate, with concomitant aromatization of the ring, to provide 4-hydroxybenzoate (4HB) for the ubiquinone pathway.</text>
</comment>
<comment type="catalytic activity">
    <reaction evidence="1">
        <text>chorismate = 4-hydroxybenzoate + pyruvate</text>
        <dbReference type="Rhea" id="RHEA:16505"/>
        <dbReference type="ChEBI" id="CHEBI:15361"/>
        <dbReference type="ChEBI" id="CHEBI:17879"/>
        <dbReference type="ChEBI" id="CHEBI:29748"/>
        <dbReference type="EC" id="4.1.3.40"/>
    </reaction>
</comment>
<comment type="pathway">
    <text evidence="1">Cofactor biosynthesis; ubiquinone biosynthesis.</text>
</comment>
<comment type="subcellular location">
    <subcellularLocation>
        <location evidence="1">Cytoplasm</location>
    </subcellularLocation>
</comment>
<comment type="similarity">
    <text evidence="1">Belongs to the UbiC family.</text>
</comment>
<gene>
    <name evidence="1" type="primary">ubiC</name>
</gene>
<dbReference type="EC" id="4.1.3.40" evidence="1"/>
<dbReference type="EMBL" id="AF292094">
    <property type="protein sequence ID" value="AAG01544.1"/>
    <property type="molecule type" value="Genomic_DNA"/>
</dbReference>
<dbReference type="SMR" id="Q9FD32"/>
<dbReference type="UniPathway" id="UPA00232"/>
<dbReference type="GO" id="GO:0005829">
    <property type="term" value="C:cytosol"/>
    <property type="evidence" value="ECO:0007669"/>
    <property type="project" value="TreeGrafter"/>
</dbReference>
<dbReference type="GO" id="GO:0008813">
    <property type="term" value="F:chorismate lyase activity"/>
    <property type="evidence" value="ECO:0007669"/>
    <property type="project" value="UniProtKB-UniRule"/>
</dbReference>
<dbReference type="GO" id="GO:0042866">
    <property type="term" value="P:pyruvate biosynthetic process"/>
    <property type="evidence" value="ECO:0007669"/>
    <property type="project" value="UniProtKB-UniRule"/>
</dbReference>
<dbReference type="GO" id="GO:0006744">
    <property type="term" value="P:ubiquinone biosynthetic process"/>
    <property type="evidence" value="ECO:0007669"/>
    <property type="project" value="UniProtKB-UniRule"/>
</dbReference>
<dbReference type="Gene3D" id="3.40.1410.10">
    <property type="entry name" value="Chorismate lyase-like"/>
    <property type="match status" value="1"/>
</dbReference>
<dbReference type="HAMAP" id="MF_01632">
    <property type="entry name" value="UbiC"/>
    <property type="match status" value="1"/>
</dbReference>
<dbReference type="InterPro" id="IPR007440">
    <property type="entry name" value="Chorismate--pyruvate_lyase"/>
</dbReference>
<dbReference type="InterPro" id="IPR028978">
    <property type="entry name" value="Chorismate_lyase_/UTRA_dom_sf"/>
</dbReference>
<dbReference type="PANTHER" id="PTHR38683">
    <property type="entry name" value="CHORISMATE PYRUVATE-LYASE"/>
    <property type="match status" value="1"/>
</dbReference>
<dbReference type="PANTHER" id="PTHR38683:SF1">
    <property type="entry name" value="CHORISMATE PYRUVATE-LYASE"/>
    <property type="match status" value="1"/>
</dbReference>
<dbReference type="Pfam" id="PF04345">
    <property type="entry name" value="Chor_lyase"/>
    <property type="match status" value="1"/>
</dbReference>
<dbReference type="SUPFAM" id="SSF64288">
    <property type="entry name" value="Chorismate lyase-like"/>
    <property type="match status" value="1"/>
</dbReference>
<accession>Q9FD32</accession>